<name>FLIT_YERE8</name>
<gene>
    <name evidence="1" type="primary">fliT</name>
    <name type="ordered locus">YE2526</name>
</gene>
<evidence type="ECO:0000255" key="1">
    <source>
        <dbReference type="HAMAP-Rule" id="MF_01180"/>
    </source>
</evidence>
<evidence type="ECO:0007829" key="2">
    <source>
        <dbReference type="PDB" id="3NKZ"/>
    </source>
</evidence>
<dbReference type="EMBL" id="AM286415">
    <property type="protein sequence ID" value="CAL12569.1"/>
    <property type="molecule type" value="Genomic_DNA"/>
</dbReference>
<dbReference type="RefSeq" id="WP_011816593.1">
    <property type="nucleotide sequence ID" value="NC_008800.1"/>
</dbReference>
<dbReference type="RefSeq" id="YP_001006733.1">
    <property type="nucleotide sequence ID" value="NC_008800.1"/>
</dbReference>
<dbReference type="PDB" id="3NKZ">
    <property type="method" value="X-ray"/>
    <property type="resolution" value="2.11 A"/>
    <property type="chains" value="A/B/C/D=1-120"/>
</dbReference>
<dbReference type="PDBsum" id="3NKZ"/>
<dbReference type="SMR" id="A1JSR8"/>
<dbReference type="KEGG" id="yen:YE2526"/>
<dbReference type="PATRIC" id="fig|393305.7.peg.2683"/>
<dbReference type="eggNOG" id="ENOG5032ZV7">
    <property type="taxonomic scope" value="Bacteria"/>
</dbReference>
<dbReference type="HOGENOM" id="CLU_155793_1_0_6"/>
<dbReference type="OrthoDB" id="6494117at2"/>
<dbReference type="EvolutionaryTrace" id="A1JSR8"/>
<dbReference type="Proteomes" id="UP000000642">
    <property type="component" value="Chromosome"/>
</dbReference>
<dbReference type="GO" id="GO:0005829">
    <property type="term" value="C:cytosol"/>
    <property type="evidence" value="ECO:0007669"/>
    <property type="project" value="UniProtKB-SubCell"/>
</dbReference>
<dbReference type="GO" id="GO:0044781">
    <property type="term" value="P:bacterial-type flagellum organization"/>
    <property type="evidence" value="ECO:0007669"/>
    <property type="project" value="UniProtKB-KW"/>
</dbReference>
<dbReference type="GO" id="GO:1902209">
    <property type="term" value="P:negative regulation of bacterial-type flagellum assembly"/>
    <property type="evidence" value="ECO:0007669"/>
    <property type="project" value="UniProtKB-UniRule"/>
</dbReference>
<dbReference type="GO" id="GO:0006457">
    <property type="term" value="P:protein folding"/>
    <property type="evidence" value="ECO:0007669"/>
    <property type="project" value="UniProtKB-UniRule"/>
</dbReference>
<dbReference type="Gene3D" id="1.20.58.380">
    <property type="entry name" value="Flagellar protein flit"/>
    <property type="match status" value="1"/>
</dbReference>
<dbReference type="HAMAP" id="MF_01180">
    <property type="entry name" value="FliT"/>
    <property type="match status" value="1"/>
</dbReference>
<dbReference type="InterPro" id="IPR008622">
    <property type="entry name" value="FliT"/>
</dbReference>
<dbReference type="NCBIfam" id="NF007836">
    <property type="entry name" value="PRK10548.1"/>
    <property type="match status" value="1"/>
</dbReference>
<dbReference type="Pfam" id="PF05400">
    <property type="entry name" value="FliT"/>
    <property type="match status" value="1"/>
</dbReference>
<keyword id="KW-0002">3D-structure</keyword>
<keyword id="KW-1005">Bacterial flagellum biogenesis</keyword>
<keyword id="KW-0143">Chaperone</keyword>
<keyword id="KW-0963">Cytoplasm</keyword>
<keyword id="KW-0678">Repressor</keyword>
<keyword id="KW-0804">Transcription</keyword>
<keyword id="KW-0805">Transcription regulation</keyword>
<comment type="function">
    <text evidence="1">Dual-function protein that regulates the transcription of class 2 flagellar operons and that also acts as an export chaperone for the filament-capping protein FliD. As a transcriptional regulator, acts as an anti-FlhDC factor; it directly binds FlhC, thus inhibiting the binding of the FlhC/FlhD complex to class 2 promoters, resulting in decreased expression of class 2 flagellar operons. As a chaperone, effects FliD transition to the membrane by preventing its premature polymerization, and by directing it to the export apparatus.</text>
</comment>
<comment type="subunit">
    <text evidence="1">Homodimer. Interacts with FliD and FlhC.</text>
</comment>
<comment type="subcellular location">
    <subcellularLocation>
        <location evidence="1">Cytoplasm</location>
        <location evidence="1">Cytosol</location>
    </subcellularLocation>
</comment>
<comment type="similarity">
    <text evidence="1">Belongs to the FliT family.</text>
</comment>
<reference key="1">
    <citation type="journal article" date="2006" name="PLoS Genet.">
        <title>The complete genome sequence and comparative genome analysis of the high pathogenicity Yersinia enterocolitica strain 8081.</title>
        <authorList>
            <person name="Thomson N.R."/>
            <person name="Howard S."/>
            <person name="Wren B.W."/>
            <person name="Holden M.T.G."/>
            <person name="Crossman L."/>
            <person name="Challis G.L."/>
            <person name="Churcher C."/>
            <person name="Mungall K."/>
            <person name="Brooks K."/>
            <person name="Chillingworth T."/>
            <person name="Feltwell T."/>
            <person name="Abdellah Z."/>
            <person name="Hauser H."/>
            <person name="Jagels K."/>
            <person name="Maddison M."/>
            <person name="Moule S."/>
            <person name="Sanders M."/>
            <person name="Whitehead S."/>
            <person name="Quail M.A."/>
            <person name="Dougan G."/>
            <person name="Parkhill J."/>
            <person name="Prentice M.B."/>
        </authorList>
    </citation>
    <scope>NUCLEOTIDE SEQUENCE [LARGE SCALE GENOMIC DNA]</scope>
    <source>
        <strain>NCTC 13174 / 8081</strain>
    </source>
</reference>
<feature type="chain" id="PRO_0000353895" description="Flagellar protein FliT">
    <location>
        <begin position="1"/>
        <end position="120"/>
    </location>
</feature>
<feature type="region of interest" description="Required for homodimerization" evidence="1">
    <location>
        <begin position="1"/>
        <end position="50"/>
    </location>
</feature>
<feature type="region of interest" description="FliD binding" evidence="1">
    <location>
        <begin position="60"/>
        <end position="98"/>
    </location>
</feature>
<feature type="helix" evidence="2">
    <location>
        <begin position="1"/>
        <end position="25"/>
    </location>
</feature>
<feature type="helix" evidence="2">
    <location>
        <begin position="32"/>
        <end position="53"/>
    </location>
</feature>
<feature type="helix" evidence="2">
    <location>
        <begin position="58"/>
        <end position="93"/>
    </location>
</feature>
<protein>
    <recommendedName>
        <fullName evidence="1">Flagellar protein FliT</fullName>
    </recommendedName>
</protein>
<organism>
    <name type="scientific">Yersinia enterocolitica serotype O:8 / biotype 1B (strain NCTC 13174 / 8081)</name>
    <dbReference type="NCBI Taxonomy" id="393305"/>
    <lineage>
        <taxon>Bacteria</taxon>
        <taxon>Pseudomonadati</taxon>
        <taxon>Pseudomonadota</taxon>
        <taxon>Gammaproteobacteria</taxon>
        <taxon>Enterobacterales</taxon>
        <taxon>Yersiniaceae</taxon>
        <taxon>Yersinia</taxon>
    </lineage>
</organism>
<proteinExistence type="evidence at protein level"/>
<sequence length="120" mass="13713">MERHQHLLSEYQQILTLSEQMLVLATEGNWDALVDLEMTYLKAVESTANITISSCSSLMLQDLLREKLRAILDNEIEIKRLLQLRLDRLSDLVGQSTKQQAVNNTYGQFPDHALLLGETQ</sequence>
<accession>A1JSR8</accession>